<keyword id="KW-0067">ATP-binding</keyword>
<keyword id="KW-0963">Cytoplasm</keyword>
<keyword id="KW-0460">Magnesium</keyword>
<keyword id="KW-0479">Metal-binding</keyword>
<keyword id="KW-0547">Nucleotide-binding</keyword>
<keyword id="KW-0554">One-carbon metabolism</keyword>
<keyword id="KW-0630">Potassium</keyword>
<keyword id="KW-0808">Transferase</keyword>
<accession>A7NEB4</accession>
<reference key="1">
    <citation type="journal article" date="2009" name="PLoS ONE">
        <title>Complete genome sequence of Francisella tularensis subspecies holarctica FTNF002-00.</title>
        <authorList>
            <person name="Barabote R.D."/>
            <person name="Xie G."/>
            <person name="Brettin T.S."/>
            <person name="Hinrichs S.H."/>
            <person name="Fey P.D."/>
            <person name="Jay J.J."/>
            <person name="Engle J.L."/>
            <person name="Godbole S.D."/>
            <person name="Noronha J.M."/>
            <person name="Scheuermann R.H."/>
            <person name="Zhou L.W."/>
            <person name="Lion C."/>
            <person name="Dempsey M.P."/>
        </authorList>
    </citation>
    <scope>NUCLEOTIDE SEQUENCE [LARGE SCALE GENOMIC DNA]</scope>
    <source>
        <strain>FTNF002-00 / FTA</strain>
    </source>
</reference>
<gene>
    <name evidence="1" type="primary">metK</name>
    <name type="ordered locus">FTA_1842</name>
</gene>
<evidence type="ECO:0000255" key="1">
    <source>
        <dbReference type="HAMAP-Rule" id="MF_00086"/>
    </source>
</evidence>
<proteinExistence type="inferred from homology"/>
<organism>
    <name type="scientific">Francisella tularensis subsp. holarctica (strain FTNF002-00 / FTA)</name>
    <dbReference type="NCBI Taxonomy" id="458234"/>
    <lineage>
        <taxon>Bacteria</taxon>
        <taxon>Pseudomonadati</taxon>
        <taxon>Pseudomonadota</taxon>
        <taxon>Gammaproteobacteria</taxon>
        <taxon>Thiotrichales</taxon>
        <taxon>Francisellaceae</taxon>
        <taxon>Francisella</taxon>
    </lineage>
</organism>
<sequence>MSKNYLFTSESVSEGHPDKLADQISDAILDEILKQDKNARVACETLVKTGMALVAGEITTSAWVDIEELVRNVITETGYDNASKGIDGRTCSVINAIGKQSRDIAQGVDRGSLEDLGAGDQGLMFGFATNETPTLMPSAIYYSHLLMRKQAELRKSGKLAWLRPDAKAQVTLAYENDKPKFIDTIVLSTQHNESISQKELHDAVIEEIVKKVIPNELITKDTKYHINPTGVFLIGGPQGDCGLTGRKIIVDTYGGAAHHGGGAFSGKDPSKVDRSGAYMGRYIAKNIVAAGLADKCEVQVAYAIGVAKPVSLMVNTFGTGKITDNQIEKLVAEVFDLRVGKIIENLDLLRPIYRKTSNYGHFGRELPEFTWEKIDKADILKSAARI</sequence>
<name>METK_FRATF</name>
<protein>
    <recommendedName>
        <fullName evidence="1">S-adenosylmethionine synthase</fullName>
        <shortName evidence="1">AdoMet synthase</shortName>
        <ecNumber evidence="1">2.5.1.6</ecNumber>
    </recommendedName>
    <alternativeName>
        <fullName evidence="1">MAT</fullName>
    </alternativeName>
    <alternativeName>
        <fullName evidence="1">Methionine adenosyltransferase</fullName>
    </alternativeName>
</protein>
<feature type="chain" id="PRO_1000007940" description="S-adenosylmethionine synthase">
    <location>
        <begin position="1"/>
        <end position="386"/>
    </location>
</feature>
<feature type="region of interest" description="Flexible loop" evidence="1">
    <location>
        <begin position="100"/>
        <end position="110"/>
    </location>
</feature>
<feature type="binding site" description="in other chain" evidence="1">
    <location>
        <position position="16"/>
    </location>
    <ligand>
        <name>ATP</name>
        <dbReference type="ChEBI" id="CHEBI:30616"/>
        <note>ligand shared between two neighboring subunits</note>
    </ligand>
</feature>
<feature type="binding site" evidence="1">
    <location>
        <position position="18"/>
    </location>
    <ligand>
        <name>Mg(2+)</name>
        <dbReference type="ChEBI" id="CHEBI:18420"/>
    </ligand>
</feature>
<feature type="binding site" evidence="1">
    <location>
        <position position="44"/>
    </location>
    <ligand>
        <name>K(+)</name>
        <dbReference type="ChEBI" id="CHEBI:29103"/>
    </ligand>
</feature>
<feature type="binding site" description="in other chain" evidence="1">
    <location>
        <position position="57"/>
    </location>
    <ligand>
        <name>L-methionine</name>
        <dbReference type="ChEBI" id="CHEBI:57844"/>
        <note>ligand shared between two neighboring subunits</note>
    </ligand>
</feature>
<feature type="binding site" description="in other chain" evidence="1">
    <location>
        <position position="100"/>
    </location>
    <ligand>
        <name>L-methionine</name>
        <dbReference type="ChEBI" id="CHEBI:57844"/>
        <note>ligand shared between two neighboring subunits</note>
    </ligand>
</feature>
<feature type="binding site" description="in other chain" evidence="1">
    <location>
        <begin position="165"/>
        <end position="167"/>
    </location>
    <ligand>
        <name>ATP</name>
        <dbReference type="ChEBI" id="CHEBI:30616"/>
        <note>ligand shared between two neighboring subunits</note>
    </ligand>
</feature>
<feature type="binding site" evidence="1">
    <location>
        <position position="240"/>
    </location>
    <ligand>
        <name>ATP</name>
        <dbReference type="ChEBI" id="CHEBI:30616"/>
        <note>ligand shared between two neighboring subunits</note>
    </ligand>
</feature>
<feature type="binding site" evidence="1">
    <location>
        <position position="240"/>
    </location>
    <ligand>
        <name>L-methionine</name>
        <dbReference type="ChEBI" id="CHEBI:57844"/>
        <note>ligand shared between two neighboring subunits</note>
    </ligand>
</feature>
<feature type="binding site" description="in other chain" evidence="1">
    <location>
        <begin position="246"/>
        <end position="247"/>
    </location>
    <ligand>
        <name>ATP</name>
        <dbReference type="ChEBI" id="CHEBI:30616"/>
        <note>ligand shared between two neighboring subunits</note>
    </ligand>
</feature>
<feature type="binding site" evidence="1">
    <location>
        <position position="263"/>
    </location>
    <ligand>
        <name>ATP</name>
        <dbReference type="ChEBI" id="CHEBI:30616"/>
        <note>ligand shared between two neighboring subunits</note>
    </ligand>
</feature>
<feature type="binding site" evidence="1">
    <location>
        <position position="267"/>
    </location>
    <ligand>
        <name>ATP</name>
        <dbReference type="ChEBI" id="CHEBI:30616"/>
        <note>ligand shared between two neighboring subunits</note>
    </ligand>
</feature>
<feature type="binding site" description="in other chain" evidence="1">
    <location>
        <position position="271"/>
    </location>
    <ligand>
        <name>L-methionine</name>
        <dbReference type="ChEBI" id="CHEBI:57844"/>
        <note>ligand shared between two neighboring subunits</note>
    </ligand>
</feature>
<dbReference type="EC" id="2.5.1.6" evidence="1"/>
<dbReference type="EMBL" id="CP000803">
    <property type="protein sequence ID" value="ABU62317.1"/>
    <property type="molecule type" value="Genomic_DNA"/>
</dbReference>
<dbReference type="RefSeq" id="WP_003017219.1">
    <property type="nucleotide sequence ID" value="NC_009749.1"/>
</dbReference>
<dbReference type="SMR" id="A7NEB4"/>
<dbReference type="GeneID" id="75264705"/>
<dbReference type="KEGG" id="fta:FTA_1842"/>
<dbReference type="HOGENOM" id="CLU_041802_1_1_6"/>
<dbReference type="UniPathway" id="UPA00315">
    <property type="reaction ID" value="UER00080"/>
</dbReference>
<dbReference type="GO" id="GO:0005737">
    <property type="term" value="C:cytoplasm"/>
    <property type="evidence" value="ECO:0007669"/>
    <property type="project" value="UniProtKB-SubCell"/>
</dbReference>
<dbReference type="GO" id="GO:0005524">
    <property type="term" value="F:ATP binding"/>
    <property type="evidence" value="ECO:0007669"/>
    <property type="project" value="UniProtKB-UniRule"/>
</dbReference>
<dbReference type="GO" id="GO:0000287">
    <property type="term" value="F:magnesium ion binding"/>
    <property type="evidence" value="ECO:0007669"/>
    <property type="project" value="UniProtKB-UniRule"/>
</dbReference>
<dbReference type="GO" id="GO:0004478">
    <property type="term" value="F:methionine adenosyltransferase activity"/>
    <property type="evidence" value="ECO:0007669"/>
    <property type="project" value="UniProtKB-UniRule"/>
</dbReference>
<dbReference type="GO" id="GO:0006730">
    <property type="term" value="P:one-carbon metabolic process"/>
    <property type="evidence" value="ECO:0007669"/>
    <property type="project" value="UniProtKB-KW"/>
</dbReference>
<dbReference type="GO" id="GO:0006556">
    <property type="term" value="P:S-adenosylmethionine biosynthetic process"/>
    <property type="evidence" value="ECO:0007669"/>
    <property type="project" value="UniProtKB-UniRule"/>
</dbReference>
<dbReference type="CDD" id="cd18079">
    <property type="entry name" value="S-AdoMet_synt"/>
    <property type="match status" value="1"/>
</dbReference>
<dbReference type="FunFam" id="3.30.300.10:FF:000003">
    <property type="entry name" value="S-adenosylmethionine synthase"/>
    <property type="match status" value="1"/>
</dbReference>
<dbReference type="Gene3D" id="3.30.300.10">
    <property type="match status" value="3"/>
</dbReference>
<dbReference type="HAMAP" id="MF_00086">
    <property type="entry name" value="S_AdoMet_synth1"/>
    <property type="match status" value="1"/>
</dbReference>
<dbReference type="InterPro" id="IPR022631">
    <property type="entry name" value="ADOMET_SYNTHASE_CS"/>
</dbReference>
<dbReference type="InterPro" id="IPR022630">
    <property type="entry name" value="S-AdoMet_synt_C"/>
</dbReference>
<dbReference type="InterPro" id="IPR022629">
    <property type="entry name" value="S-AdoMet_synt_central"/>
</dbReference>
<dbReference type="InterPro" id="IPR022628">
    <property type="entry name" value="S-AdoMet_synt_N"/>
</dbReference>
<dbReference type="InterPro" id="IPR002133">
    <property type="entry name" value="S-AdoMet_synthetase"/>
</dbReference>
<dbReference type="InterPro" id="IPR022636">
    <property type="entry name" value="S-AdoMet_synthetase_sfam"/>
</dbReference>
<dbReference type="NCBIfam" id="TIGR01034">
    <property type="entry name" value="metK"/>
    <property type="match status" value="1"/>
</dbReference>
<dbReference type="PANTHER" id="PTHR11964">
    <property type="entry name" value="S-ADENOSYLMETHIONINE SYNTHETASE"/>
    <property type="match status" value="1"/>
</dbReference>
<dbReference type="Pfam" id="PF02773">
    <property type="entry name" value="S-AdoMet_synt_C"/>
    <property type="match status" value="1"/>
</dbReference>
<dbReference type="Pfam" id="PF02772">
    <property type="entry name" value="S-AdoMet_synt_M"/>
    <property type="match status" value="1"/>
</dbReference>
<dbReference type="Pfam" id="PF00438">
    <property type="entry name" value="S-AdoMet_synt_N"/>
    <property type="match status" value="1"/>
</dbReference>
<dbReference type="PIRSF" id="PIRSF000497">
    <property type="entry name" value="MAT"/>
    <property type="match status" value="1"/>
</dbReference>
<dbReference type="SUPFAM" id="SSF55973">
    <property type="entry name" value="S-adenosylmethionine synthetase"/>
    <property type="match status" value="3"/>
</dbReference>
<dbReference type="PROSITE" id="PS00376">
    <property type="entry name" value="ADOMET_SYNTHASE_1"/>
    <property type="match status" value="1"/>
</dbReference>
<dbReference type="PROSITE" id="PS00377">
    <property type="entry name" value="ADOMET_SYNTHASE_2"/>
    <property type="match status" value="1"/>
</dbReference>
<comment type="function">
    <text evidence="1">Catalyzes the formation of S-adenosylmethionine (AdoMet) from methionine and ATP. The overall synthetic reaction is composed of two sequential steps, AdoMet formation and the subsequent tripolyphosphate hydrolysis which occurs prior to release of AdoMet from the enzyme.</text>
</comment>
<comment type="catalytic activity">
    <reaction evidence="1">
        <text>L-methionine + ATP + H2O = S-adenosyl-L-methionine + phosphate + diphosphate</text>
        <dbReference type="Rhea" id="RHEA:21080"/>
        <dbReference type="ChEBI" id="CHEBI:15377"/>
        <dbReference type="ChEBI" id="CHEBI:30616"/>
        <dbReference type="ChEBI" id="CHEBI:33019"/>
        <dbReference type="ChEBI" id="CHEBI:43474"/>
        <dbReference type="ChEBI" id="CHEBI:57844"/>
        <dbReference type="ChEBI" id="CHEBI:59789"/>
        <dbReference type="EC" id="2.5.1.6"/>
    </reaction>
</comment>
<comment type="cofactor">
    <cofactor evidence="1">
        <name>Mg(2+)</name>
        <dbReference type="ChEBI" id="CHEBI:18420"/>
    </cofactor>
    <text evidence="1">Binds 2 divalent ions per subunit.</text>
</comment>
<comment type="cofactor">
    <cofactor evidence="1">
        <name>K(+)</name>
        <dbReference type="ChEBI" id="CHEBI:29103"/>
    </cofactor>
    <text evidence="1">Binds 1 potassium ion per subunit.</text>
</comment>
<comment type="pathway">
    <text evidence="1">Amino-acid biosynthesis; S-adenosyl-L-methionine biosynthesis; S-adenosyl-L-methionine from L-methionine: step 1/1.</text>
</comment>
<comment type="subunit">
    <text evidence="1">Homotetramer; dimer of dimers.</text>
</comment>
<comment type="subcellular location">
    <subcellularLocation>
        <location evidence="1">Cytoplasm</location>
    </subcellularLocation>
</comment>
<comment type="similarity">
    <text evidence="1">Belongs to the AdoMet synthase family.</text>
</comment>